<comment type="function">
    <text evidence="1">Part of the ABC transporter complex PstSACB involved in phosphate import. Responsible for energy coupling to the transport system.</text>
</comment>
<comment type="catalytic activity">
    <reaction evidence="1">
        <text>phosphate(out) + ATP + H2O = ADP + 2 phosphate(in) + H(+)</text>
        <dbReference type="Rhea" id="RHEA:24440"/>
        <dbReference type="ChEBI" id="CHEBI:15377"/>
        <dbReference type="ChEBI" id="CHEBI:15378"/>
        <dbReference type="ChEBI" id="CHEBI:30616"/>
        <dbReference type="ChEBI" id="CHEBI:43474"/>
        <dbReference type="ChEBI" id="CHEBI:456216"/>
        <dbReference type="EC" id="7.3.2.1"/>
    </reaction>
</comment>
<comment type="subunit">
    <text evidence="1">The complex is composed of two ATP-binding proteins (PstB), two transmembrane proteins (PstC and PstA) and a solute-binding protein (PstS).</text>
</comment>
<comment type="subcellular location">
    <subcellularLocation>
        <location evidence="1">Cell inner membrane</location>
        <topology evidence="1">Peripheral membrane protein</topology>
    </subcellularLocation>
</comment>
<comment type="similarity">
    <text evidence="1">Belongs to the ABC transporter superfamily. Phosphate importer (TC 3.A.1.7) family.</text>
</comment>
<protein>
    <recommendedName>
        <fullName evidence="1">Phosphate import ATP-binding protein PstB 2</fullName>
        <ecNumber evidence="1">7.3.2.1</ecNumber>
    </recommendedName>
    <alternativeName>
        <fullName evidence="1">ABC phosphate transporter 2</fullName>
    </alternativeName>
    <alternativeName>
        <fullName evidence="1">Phosphate-transporting ATPase 2</fullName>
    </alternativeName>
</protein>
<accession>Q2JTU3</accession>
<feature type="chain" id="PRO_0000272562" description="Phosphate import ATP-binding protein PstB 2">
    <location>
        <begin position="1"/>
        <end position="265"/>
    </location>
</feature>
<feature type="domain" description="ABC transporter" evidence="1">
    <location>
        <begin position="13"/>
        <end position="260"/>
    </location>
</feature>
<feature type="binding site" evidence="1">
    <location>
        <begin position="45"/>
        <end position="52"/>
    </location>
    <ligand>
        <name>ATP</name>
        <dbReference type="ChEBI" id="CHEBI:30616"/>
    </ligand>
</feature>
<proteinExistence type="inferred from homology"/>
<organism>
    <name type="scientific">Synechococcus sp. (strain JA-3-3Ab)</name>
    <name type="common">Cyanobacteria bacterium Yellowstone A-Prime</name>
    <dbReference type="NCBI Taxonomy" id="321327"/>
    <lineage>
        <taxon>Bacteria</taxon>
        <taxon>Bacillati</taxon>
        <taxon>Cyanobacteriota</taxon>
        <taxon>Cyanophyceae</taxon>
        <taxon>Synechococcales</taxon>
        <taxon>Synechococcaceae</taxon>
        <taxon>Synechococcus</taxon>
    </lineage>
</organism>
<gene>
    <name evidence="1" type="primary">pstB2</name>
    <name type="synonym">pstB-2</name>
    <name type="ordered locus">CYA_1735</name>
</gene>
<reference key="1">
    <citation type="journal article" date="2007" name="ISME J.">
        <title>Population level functional diversity in a microbial community revealed by comparative genomic and metagenomic analyses.</title>
        <authorList>
            <person name="Bhaya D."/>
            <person name="Grossman A.R."/>
            <person name="Steunou A.-S."/>
            <person name="Khuri N."/>
            <person name="Cohan F.M."/>
            <person name="Hamamura N."/>
            <person name="Melendrez M.C."/>
            <person name="Bateson M.M."/>
            <person name="Ward D.M."/>
            <person name="Heidelberg J.F."/>
        </authorList>
    </citation>
    <scope>NUCLEOTIDE SEQUENCE [LARGE SCALE GENOMIC DNA]</scope>
    <source>
        <strain>JA-3-3Ab</strain>
    </source>
</reference>
<name>PSTB2_SYNJA</name>
<sequence>MQTQSLNQTSYVFRTENLNVYYGSNLAVKNVTLDIPARQITAFIGPSGCGKSTILRCFNRTNDLIPGARVEGKLTYHGKDLYAKEVDPVAVRRRIGMVFQKPNPFPKSIYDNVAYGPRVLGMKVDLDEVVETSLKRAALWDEVKDKLKENGQSLSGGQQQRLCIARALAVQPDVILMDEPCSALDPISTRRIEELMKELVQDYTIIIVTHNLQQAGRVSDMTAFFSVELVGSNRVGELIEFDRTEVIFNSPTKQATRDYVEGRFG</sequence>
<keyword id="KW-0067">ATP-binding</keyword>
<keyword id="KW-0997">Cell inner membrane</keyword>
<keyword id="KW-1003">Cell membrane</keyword>
<keyword id="KW-0472">Membrane</keyword>
<keyword id="KW-0547">Nucleotide-binding</keyword>
<keyword id="KW-0592">Phosphate transport</keyword>
<keyword id="KW-1278">Translocase</keyword>
<keyword id="KW-0813">Transport</keyword>
<dbReference type="EC" id="7.3.2.1" evidence="1"/>
<dbReference type="EMBL" id="CP000239">
    <property type="protein sequence ID" value="ABC99890.1"/>
    <property type="molecule type" value="Genomic_DNA"/>
</dbReference>
<dbReference type="RefSeq" id="WP_011430566.1">
    <property type="nucleotide sequence ID" value="NC_007775.1"/>
</dbReference>
<dbReference type="SMR" id="Q2JTU3"/>
<dbReference type="STRING" id="321327.CYA_1735"/>
<dbReference type="KEGG" id="cya:CYA_1735"/>
<dbReference type="eggNOG" id="COG1117">
    <property type="taxonomic scope" value="Bacteria"/>
</dbReference>
<dbReference type="HOGENOM" id="CLU_000604_1_22_3"/>
<dbReference type="OrthoDB" id="9802185at2"/>
<dbReference type="Proteomes" id="UP000008818">
    <property type="component" value="Chromosome"/>
</dbReference>
<dbReference type="GO" id="GO:0005886">
    <property type="term" value="C:plasma membrane"/>
    <property type="evidence" value="ECO:0007669"/>
    <property type="project" value="UniProtKB-SubCell"/>
</dbReference>
<dbReference type="GO" id="GO:0005524">
    <property type="term" value="F:ATP binding"/>
    <property type="evidence" value="ECO:0007669"/>
    <property type="project" value="UniProtKB-KW"/>
</dbReference>
<dbReference type="GO" id="GO:0016887">
    <property type="term" value="F:ATP hydrolysis activity"/>
    <property type="evidence" value="ECO:0007669"/>
    <property type="project" value="InterPro"/>
</dbReference>
<dbReference type="GO" id="GO:0015415">
    <property type="term" value="F:ATPase-coupled phosphate ion transmembrane transporter activity"/>
    <property type="evidence" value="ECO:0007669"/>
    <property type="project" value="UniProtKB-EC"/>
</dbReference>
<dbReference type="GO" id="GO:0035435">
    <property type="term" value="P:phosphate ion transmembrane transport"/>
    <property type="evidence" value="ECO:0007669"/>
    <property type="project" value="InterPro"/>
</dbReference>
<dbReference type="CDD" id="cd03260">
    <property type="entry name" value="ABC_PstB_phosphate_transporter"/>
    <property type="match status" value="1"/>
</dbReference>
<dbReference type="Gene3D" id="3.40.50.300">
    <property type="entry name" value="P-loop containing nucleotide triphosphate hydrolases"/>
    <property type="match status" value="1"/>
</dbReference>
<dbReference type="InterPro" id="IPR003593">
    <property type="entry name" value="AAA+_ATPase"/>
</dbReference>
<dbReference type="InterPro" id="IPR003439">
    <property type="entry name" value="ABC_transporter-like_ATP-bd"/>
</dbReference>
<dbReference type="InterPro" id="IPR017871">
    <property type="entry name" value="ABC_transporter-like_CS"/>
</dbReference>
<dbReference type="InterPro" id="IPR027417">
    <property type="entry name" value="P-loop_NTPase"/>
</dbReference>
<dbReference type="InterPro" id="IPR005670">
    <property type="entry name" value="PstB-like"/>
</dbReference>
<dbReference type="NCBIfam" id="TIGR00972">
    <property type="entry name" value="3a0107s01c2"/>
    <property type="match status" value="1"/>
</dbReference>
<dbReference type="PANTHER" id="PTHR43423">
    <property type="entry name" value="ABC TRANSPORTER I FAMILY MEMBER 17"/>
    <property type="match status" value="1"/>
</dbReference>
<dbReference type="PANTHER" id="PTHR43423:SF1">
    <property type="entry name" value="ABC TRANSPORTER I FAMILY MEMBER 17"/>
    <property type="match status" value="1"/>
</dbReference>
<dbReference type="Pfam" id="PF00005">
    <property type="entry name" value="ABC_tran"/>
    <property type="match status" value="1"/>
</dbReference>
<dbReference type="SMART" id="SM00382">
    <property type="entry name" value="AAA"/>
    <property type="match status" value="1"/>
</dbReference>
<dbReference type="SUPFAM" id="SSF52540">
    <property type="entry name" value="P-loop containing nucleoside triphosphate hydrolases"/>
    <property type="match status" value="1"/>
</dbReference>
<dbReference type="PROSITE" id="PS00211">
    <property type="entry name" value="ABC_TRANSPORTER_1"/>
    <property type="match status" value="1"/>
</dbReference>
<dbReference type="PROSITE" id="PS50893">
    <property type="entry name" value="ABC_TRANSPORTER_2"/>
    <property type="match status" value="1"/>
</dbReference>
<dbReference type="PROSITE" id="PS51238">
    <property type="entry name" value="PSTB"/>
    <property type="match status" value="1"/>
</dbReference>
<evidence type="ECO:0000255" key="1">
    <source>
        <dbReference type="HAMAP-Rule" id="MF_01702"/>
    </source>
</evidence>